<sequence>MDNDKYLKGTTTVGVVCTDGIVLASEQRATMGHFIASKTAKKVYQIDDLVGMTTAGSVGDAQQLVRLVSVESQLYKMRRNESMTIKGIATLMSNFLNANRYYPMMVQLLIGGVDKNGPAIYSLDPMGGSIEETRISATGSGSPMAYGVLEDQYREDIAVKEGLDLAIRAIHNATKRDSASGENIDVVVITKEAFKRLDPEEVKSRRALLN</sequence>
<protein>
    <recommendedName>
        <fullName evidence="1">Proteasome subunit beta</fullName>
        <ecNumber evidence="1">3.4.25.1</ecNumber>
    </recommendedName>
    <alternativeName>
        <fullName evidence="1">20S proteasome beta subunit</fullName>
    </alternativeName>
    <alternativeName>
        <fullName evidence="1">Proteasome core protein PsmB</fullName>
    </alternativeName>
</protein>
<comment type="function">
    <text evidence="1">Component of the proteasome core, a large protease complex with broad specificity involved in protein degradation.</text>
</comment>
<comment type="catalytic activity">
    <reaction evidence="1">
        <text>Cleavage of peptide bonds with very broad specificity.</text>
        <dbReference type="EC" id="3.4.25.1"/>
    </reaction>
</comment>
<comment type="activity regulation">
    <text evidence="1">The formation of the proteasomal ATPase PAN-20S proteasome complex, via the docking of the C-termini of PAN into the intersubunit pockets in the alpha-rings, triggers opening of the gate for substrate entry. Interconversion between the open-gate and close-gate conformations leads to a dynamic regulation of the 20S proteasome proteolysis activity.</text>
</comment>
<comment type="subunit">
    <text evidence="1">The 20S proteasome core is composed of 14 alpha and 14 beta subunits that assemble into four stacked heptameric rings, resulting in a barrel-shaped structure. The two inner rings, each composed of seven catalytic beta subunits, are sandwiched by two outer rings, each composed of seven alpha subunits. The catalytic chamber with the active sites is on the inside of the barrel. Has a gated structure, the ends of the cylinder being occluded by the N-termini of the alpha-subunits. Is capped at one or both ends by the proteasome regulatory ATPase, PAN.</text>
</comment>
<comment type="subcellular location">
    <subcellularLocation>
        <location evidence="1">Cytoplasm</location>
    </subcellularLocation>
</comment>
<comment type="similarity">
    <text evidence="1">Belongs to the peptidase T1B family.</text>
</comment>
<feature type="propeptide" id="PRO_0000397372" description="Removed in mature form; by autocatalysis" evidence="1">
    <location>
        <begin position="1"/>
        <end position="9"/>
    </location>
</feature>
<feature type="chain" id="PRO_0000397373" description="Proteasome subunit beta">
    <location>
        <begin position="10"/>
        <end position="210"/>
    </location>
</feature>
<feature type="active site" description="Nucleophile" evidence="1">
    <location>
        <position position="10"/>
    </location>
</feature>
<evidence type="ECO:0000255" key="1">
    <source>
        <dbReference type="HAMAP-Rule" id="MF_02113"/>
    </source>
</evidence>
<organism>
    <name type="scientific">Methanosarcina mazei (strain ATCC BAA-159 / DSM 3647 / Goe1 / Go1 / JCM 11833 / OCM 88)</name>
    <name type="common">Methanosarcina frisia</name>
    <dbReference type="NCBI Taxonomy" id="192952"/>
    <lineage>
        <taxon>Archaea</taxon>
        <taxon>Methanobacteriati</taxon>
        <taxon>Methanobacteriota</taxon>
        <taxon>Stenosarchaea group</taxon>
        <taxon>Methanomicrobia</taxon>
        <taxon>Methanosarcinales</taxon>
        <taxon>Methanosarcinaceae</taxon>
        <taxon>Methanosarcina</taxon>
    </lineage>
</organism>
<gene>
    <name evidence="1" type="primary">psmB</name>
    <name type="ordered locus">MM_0694</name>
</gene>
<accession>Q8PZ04</accession>
<proteinExistence type="inferred from homology"/>
<reference key="1">
    <citation type="journal article" date="2002" name="J. Mol. Microbiol. Biotechnol.">
        <title>The genome of Methanosarcina mazei: evidence for lateral gene transfer between Bacteria and Archaea.</title>
        <authorList>
            <person name="Deppenmeier U."/>
            <person name="Johann A."/>
            <person name="Hartsch T."/>
            <person name="Merkl R."/>
            <person name="Schmitz R.A."/>
            <person name="Martinez-Arias R."/>
            <person name="Henne A."/>
            <person name="Wiezer A."/>
            <person name="Baeumer S."/>
            <person name="Jacobi C."/>
            <person name="Brueggemann H."/>
            <person name="Lienard T."/>
            <person name="Christmann A."/>
            <person name="Boemecke M."/>
            <person name="Steckel S."/>
            <person name="Bhattacharyya A."/>
            <person name="Lykidis A."/>
            <person name="Overbeek R."/>
            <person name="Klenk H.-P."/>
            <person name="Gunsalus R.P."/>
            <person name="Fritz H.-J."/>
            <person name="Gottschalk G."/>
        </authorList>
    </citation>
    <scope>NUCLEOTIDE SEQUENCE [LARGE SCALE GENOMIC DNA]</scope>
    <source>
        <strain>ATCC BAA-159 / DSM 3647 / Goe1 / Go1 / JCM 11833 / OCM 88</strain>
    </source>
</reference>
<name>PSB_METMA</name>
<dbReference type="EC" id="3.4.25.1" evidence="1"/>
<dbReference type="EMBL" id="AE008384">
    <property type="protein sequence ID" value="AAM30390.1"/>
    <property type="molecule type" value="Genomic_DNA"/>
</dbReference>
<dbReference type="RefSeq" id="WP_011032645.1">
    <property type="nucleotide sequence ID" value="NC_003901.1"/>
</dbReference>
<dbReference type="SMR" id="Q8PZ04"/>
<dbReference type="MEROPS" id="T01.002"/>
<dbReference type="GeneID" id="82159710"/>
<dbReference type="KEGG" id="mma:MM_0694"/>
<dbReference type="PATRIC" id="fig|192952.21.peg.825"/>
<dbReference type="eggNOG" id="arCOG00970">
    <property type="taxonomic scope" value="Archaea"/>
</dbReference>
<dbReference type="HOGENOM" id="CLU_035750_7_2_2"/>
<dbReference type="Proteomes" id="UP000000595">
    <property type="component" value="Chromosome"/>
</dbReference>
<dbReference type="GO" id="GO:0005737">
    <property type="term" value="C:cytoplasm"/>
    <property type="evidence" value="ECO:0007669"/>
    <property type="project" value="UniProtKB-SubCell"/>
</dbReference>
<dbReference type="GO" id="GO:0019774">
    <property type="term" value="C:proteasome core complex, beta-subunit complex"/>
    <property type="evidence" value="ECO:0007669"/>
    <property type="project" value="UniProtKB-UniRule"/>
</dbReference>
<dbReference type="GO" id="GO:0004298">
    <property type="term" value="F:threonine-type endopeptidase activity"/>
    <property type="evidence" value="ECO:0007669"/>
    <property type="project" value="UniProtKB-UniRule"/>
</dbReference>
<dbReference type="GO" id="GO:0010498">
    <property type="term" value="P:proteasomal protein catabolic process"/>
    <property type="evidence" value="ECO:0007669"/>
    <property type="project" value="UniProtKB-UniRule"/>
</dbReference>
<dbReference type="CDD" id="cd03764">
    <property type="entry name" value="proteasome_beta_archeal"/>
    <property type="match status" value="1"/>
</dbReference>
<dbReference type="FunFam" id="3.60.20.10:FF:000049">
    <property type="entry name" value="Proteasome subunit beta"/>
    <property type="match status" value="1"/>
</dbReference>
<dbReference type="Gene3D" id="3.60.20.10">
    <property type="entry name" value="Glutamine Phosphoribosylpyrophosphate, subunit 1, domain 1"/>
    <property type="match status" value="1"/>
</dbReference>
<dbReference type="HAMAP" id="MF_02113_A">
    <property type="entry name" value="Proteasome_B_A"/>
    <property type="match status" value="1"/>
</dbReference>
<dbReference type="InterPro" id="IPR029055">
    <property type="entry name" value="Ntn_hydrolases_N"/>
</dbReference>
<dbReference type="InterPro" id="IPR019983">
    <property type="entry name" value="Pept_T1A_Psome_bsu_arc"/>
</dbReference>
<dbReference type="InterPro" id="IPR000243">
    <property type="entry name" value="Pept_T1A_subB"/>
</dbReference>
<dbReference type="InterPro" id="IPR016050">
    <property type="entry name" value="Proteasome_bsu_CS"/>
</dbReference>
<dbReference type="InterPro" id="IPR001353">
    <property type="entry name" value="Proteasome_sua/b"/>
</dbReference>
<dbReference type="InterPro" id="IPR023333">
    <property type="entry name" value="Proteasome_suB-type"/>
</dbReference>
<dbReference type="NCBIfam" id="TIGR03634">
    <property type="entry name" value="arc_protsome_B"/>
    <property type="match status" value="1"/>
</dbReference>
<dbReference type="PANTHER" id="PTHR32194:SF0">
    <property type="entry name" value="ATP-DEPENDENT PROTEASE SUBUNIT HSLV"/>
    <property type="match status" value="1"/>
</dbReference>
<dbReference type="PANTHER" id="PTHR32194">
    <property type="entry name" value="METALLOPROTEASE TLDD"/>
    <property type="match status" value="1"/>
</dbReference>
<dbReference type="Pfam" id="PF00227">
    <property type="entry name" value="Proteasome"/>
    <property type="match status" value="1"/>
</dbReference>
<dbReference type="PRINTS" id="PR00141">
    <property type="entry name" value="PROTEASOME"/>
</dbReference>
<dbReference type="SUPFAM" id="SSF56235">
    <property type="entry name" value="N-terminal nucleophile aminohydrolases (Ntn hydrolases)"/>
    <property type="match status" value="1"/>
</dbReference>
<dbReference type="PROSITE" id="PS00854">
    <property type="entry name" value="PROTEASOME_BETA_1"/>
    <property type="match status" value="1"/>
</dbReference>
<dbReference type="PROSITE" id="PS51476">
    <property type="entry name" value="PROTEASOME_BETA_2"/>
    <property type="match status" value="1"/>
</dbReference>
<keyword id="KW-0068">Autocatalytic cleavage</keyword>
<keyword id="KW-0963">Cytoplasm</keyword>
<keyword id="KW-0378">Hydrolase</keyword>
<keyword id="KW-0645">Protease</keyword>
<keyword id="KW-0647">Proteasome</keyword>
<keyword id="KW-0888">Threonine protease</keyword>
<keyword id="KW-0865">Zymogen</keyword>